<proteinExistence type="inferred from homology"/>
<dbReference type="EMBL" id="MH837193">
    <property type="protein sequence ID" value="QBL54261.1"/>
    <property type="molecule type" value="Genomic_DNA"/>
</dbReference>
<dbReference type="SMR" id="A0A482ATU4"/>
<dbReference type="VEuPathDB" id="FungiDB:SPCC1183.10"/>
<dbReference type="GO" id="GO:0005737">
    <property type="term" value="C:cytoplasm"/>
    <property type="evidence" value="ECO:0000305"/>
    <property type="project" value="UniProtKB"/>
</dbReference>
<dbReference type="GO" id="GO:0005774">
    <property type="term" value="C:vacuolar membrane"/>
    <property type="evidence" value="ECO:0007669"/>
    <property type="project" value="UniProtKB-SubCell"/>
</dbReference>
<dbReference type="GO" id="GO:0110134">
    <property type="term" value="P:meiotic drive"/>
    <property type="evidence" value="ECO:0000314"/>
    <property type="project" value="UniProtKB"/>
</dbReference>
<dbReference type="InterPro" id="IPR004982">
    <property type="entry name" value="WTF"/>
</dbReference>
<dbReference type="Pfam" id="PF03303">
    <property type="entry name" value="WTF"/>
    <property type="match status" value="1"/>
</dbReference>
<evidence type="ECO:0000250" key="1">
    <source>
        <dbReference type="UniProtKB" id="A0A218N034"/>
    </source>
</evidence>
<evidence type="ECO:0000250" key="2">
    <source>
        <dbReference type="UniProtKB" id="O74420"/>
    </source>
</evidence>
<evidence type="ECO:0000255" key="3"/>
<evidence type="ECO:0000256" key="4">
    <source>
        <dbReference type="SAM" id="MobiDB-lite"/>
    </source>
</evidence>
<evidence type="ECO:0000269" key="5">
    <source>
    </source>
</evidence>
<evidence type="ECO:0000303" key="6">
    <source>
    </source>
</evidence>
<evidence type="ECO:0000305" key="7"/>
<evidence type="ECO:0000312" key="8">
    <source>
        <dbReference type="EMBL" id="QBL54261.1"/>
    </source>
</evidence>
<keyword id="KW-0472">Membrane</keyword>
<keyword id="KW-0812">Transmembrane</keyword>
<keyword id="KW-1133">Transmembrane helix</keyword>
<keyword id="KW-0926">Vacuole</keyword>
<name>WTF1_SCHPM</name>
<reference evidence="8" key="1">
    <citation type="journal article" date="2020" name="PLoS Genet.">
        <title>Dramatically diverse Schizosaccharomyces pombe wtf meiotic drivers all display high gamete-killing efficiency.</title>
        <authorList>
            <person name="Bravo Nunez M.A."/>
            <person name="Sabbarini I.M."/>
            <person name="Eickbush M.T."/>
            <person name="Liang Y."/>
            <person name="Lange J.J."/>
            <person name="Kent A.M."/>
            <person name="Zanders S.E."/>
        </authorList>
    </citation>
    <scope>NUCLEOTIDE SEQUENCE [GENOMIC DNA]</scope>
    <scope>FUNCTION</scope>
    <source>
        <strain evidence="8">FY29033</strain>
    </source>
</reference>
<gene>
    <name evidence="8" type="primary">wtf1</name>
</gene>
<sequence length="248" mass="28305">MKNNYTSLKSSIDKEDELKSVHEIDLEKGLLPEYNSDEESTLPPYSDHARVSNPPNTHRENHSSGTTDNSSPFLIKLLISFTSIILFNAPAVCYLKYKDAFFKNYGAAEWTLIGFWCASSLIIFTFSWYFYETWTKAVGKGIKHFLKKWRNIPMAFSEVFLFNILVGSPRVTLRHISGERWGLKCSLADHIIFAILSILVFIVETVEPGSSKINIMKRLRGDNARDATQHVNEYTAVPLREMNPESEA</sequence>
<organism evidence="8">
    <name type="scientific">Schizosaccharomyces pombe</name>
    <name type="common">Fission yeast</name>
    <dbReference type="NCBI Taxonomy" id="4896"/>
    <lineage>
        <taxon>Eukaryota</taxon>
        <taxon>Fungi</taxon>
        <taxon>Dikarya</taxon>
        <taxon>Ascomycota</taxon>
        <taxon>Taphrinomycotina</taxon>
        <taxon>Schizosaccharomycetes</taxon>
        <taxon>Schizosaccharomycetales</taxon>
        <taxon>Schizosaccharomycetaceae</taxon>
        <taxon>Schizosaccharomyces</taxon>
    </lineage>
</organism>
<protein>
    <recommendedName>
        <fullName evidence="6">Meiotic drive suppressor wtf1</fullName>
    </recommendedName>
</protein>
<comment type="function">
    <text evidence="1 5">Acts as a suppressor component of the dual wtf meiotic drive system, and can suppress but not confer meiotic drive by compatible poisons (PubMed:32032353). Wtf meiotic drive systems promote unequal transmission of alleles from the parental zygote to progeny spores by encoding a poison and an antidote from the same locus; the poison is trans-acting and forms toxic aggregates in all spores within an ascus, wherease the antidote is spore-specific and targets aggregates for degradation by the vacuole (By similarity). Meiotic drive by wtf systems therefore lead to poisoning of all progeny that do not inherit the dual poison/antidote allele, or express a compatible antidote (PubMed:32032353).</text>
</comment>
<comment type="subunit">
    <text evidence="1 2">Homomer (By similarity). Interacts with other proteins that exhibit high sequence similarity (By similarity).</text>
</comment>
<comment type="subcellular location">
    <subcellularLocation>
        <location evidence="1 3">Spore membrane</location>
        <topology evidence="3">Multi-pass membrane protein</topology>
    </subcellularLocation>
    <subcellularLocation>
        <location evidence="1 3">Vacuole membrane</location>
        <topology evidence="3">Multi-pass membrane protein</topology>
    </subcellularLocation>
</comment>
<comment type="similarity">
    <text evidence="7">Belongs to the WTF family.</text>
</comment>
<feature type="chain" id="PRO_0000452252" description="Meiotic drive suppressor wtf1">
    <location>
        <begin position="1"/>
        <end position="248"/>
    </location>
</feature>
<feature type="transmembrane region" description="Helical" evidence="3">
    <location>
        <begin position="73"/>
        <end position="93"/>
    </location>
</feature>
<feature type="transmembrane region" description="Helical" evidence="3">
    <location>
        <begin position="110"/>
        <end position="130"/>
    </location>
</feature>
<feature type="transmembrane region" description="Helical" evidence="3">
    <location>
        <begin position="152"/>
        <end position="172"/>
    </location>
</feature>
<feature type="transmembrane region" description="Helical" evidence="3">
    <location>
        <begin position="186"/>
        <end position="206"/>
    </location>
</feature>
<feature type="region of interest" description="Disordered" evidence="4">
    <location>
        <begin position="30"/>
        <end position="68"/>
    </location>
</feature>
<accession>A0A482ATU4</accession>